<keyword id="KW-0378">Hydrolase</keyword>
<keyword id="KW-1185">Reference proteome</keyword>
<organism>
    <name type="scientific">Caldanaerobacter subterraneus subsp. tengcongensis (strain DSM 15242 / JCM 11007 / NBRC 100824 / MB4)</name>
    <name type="common">Thermoanaerobacter tengcongensis</name>
    <dbReference type="NCBI Taxonomy" id="273068"/>
    <lineage>
        <taxon>Bacteria</taxon>
        <taxon>Bacillati</taxon>
        <taxon>Bacillota</taxon>
        <taxon>Clostridia</taxon>
        <taxon>Thermoanaerobacterales</taxon>
        <taxon>Thermoanaerobacteraceae</taxon>
        <taxon>Caldanaerobacter</taxon>
    </lineage>
</organism>
<name>DGTL1_CALS4</name>
<reference key="1">
    <citation type="journal article" date="2002" name="Genome Res.">
        <title>A complete sequence of the T. tengcongensis genome.</title>
        <authorList>
            <person name="Bao Q."/>
            <person name="Tian Y."/>
            <person name="Li W."/>
            <person name="Xu Z."/>
            <person name="Xuan Z."/>
            <person name="Hu S."/>
            <person name="Dong W."/>
            <person name="Yang J."/>
            <person name="Chen Y."/>
            <person name="Xue Y."/>
            <person name="Xu Y."/>
            <person name="Lai X."/>
            <person name="Huang L."/>
            <person name="Dong X."/>
            <person name="Ma Y."/>
            <person name="Ling L."/>
            <person name="Tan H."/>
            <person name="Chen R."/>
            <person name="Wang J."/>
            <person name="Yu J."/>
            <person name="Yang H."/>
        </authorList>
    </citation>
    <scope>NUCLEOTIDE SEQUENCE [LARGE SCALE GENOMIC DNA]</scope>
    <source>
        <strain>DSM 15242 / JCM 11007 / NBRC 100824 / MB4</strain>
    </source>
</reference>
<proteinExistence type="inferred from homology"/>
<accession>Q8R5R4</accession>
<sequence length="339" mass="39236">MKVREITEELEYKLLSPYAAKSRESRGRAREEEKCDIRTDFQRDRDRIIHSKAFRRLSHKTQVFISPEGDHYRTRLTHTLEVAQIARTIARALRLNEDLTEAIALGHDLGHTPFGHSGEEVLNKLLKGGFRHSEQSIRVVEVLENDGKGLNLTWEVKDGILNHSTGGKPSTLEGQVVQISDKIAYINHDIDDAIRGRVLKPEDLPKDLIAILGDKHGKRIDTMVRDVIYNSMGKPEVSMSKEIYEATYQLRAFLFEKVYIGSKAKRDEEKAKRVVEQLFYYFYDNVDKMPKEFVRLAEIYGRERAVADYIAGMTDKYALLKYKEIFLPSPWFEQNIFDL</sequence>
<dbReference type="EMBL" id="AE008691">
    <property type="protein sequence ID" value="AAM24951.1"/>
    <property type="molecule type" value="Genomic_DNA"/>
</dbReference>
<dbReference type="RefSeq" id="WP_011025953.1">
    <property type="nucleotide sequence ID" value="NC_003869.1"/>
</dbReference>
<dbReference type="SMR" id="Q8R5R4"/>
<dbReference type="STRING" id="273068.TTE1757"/>
<dbReference type="KEGG" id="tte:TTE1757"/>
<dbReference type="eggNOG" id="COG0232">
    <property type="taxonomic scope" value="Bacteria"/>
</dbReference>
<dbReference type="HOGENOM" id="CLU_028163_1_1_9"/>
<dbReference type="OrthoDB" id="9803619at2"/>
<dbReference type="Proteomes" id="UP000000555">
    <property type="component" value="Chromosome"/>
</dbReference>
<dbReference type="GO" id="GO:0016793">
    <property type="term" value="F:triphosphoric monoester hydrolase activity"/>
    <property type="evidence" value="ECO:0007669"/>
    <property type="project" value="InterPro"/>
</dbReference>
<dbReference type="CDD" id="cd00077">
    <property type="entry name" value="HDc"/>
    <property type="match status" value="1"/>
</dbReference>
<dbReference type="Gene3D" id="1.10.3210.10">
    <property type="entry name" value="Hypothetical protein af1432"/>
    <property type="match status" value="1"/>
</dbReference>
<dbReference type="HAMAP" id="MF_01212">
    <property type="entry name" value="dGTPase_type2"/>
    <property type="match status" value="1"/>
</dbReference>
<dbReference type="InterPro" id="IPR006261">
    <property type="entry name" value="dGTPase"/>
</dbReference>
<dbReference type="InterPro" id="IPR051094">
    <property type="entry name" value="Diverse_Catalytic_Enzymes"/>
</dbReference>
<dbReference type="InterPro" id="IPR023023">
    <property type="entry name" value="dNTPase_2"/>
</dbReference>
<dbReference type="InterPro" id="IPR003607">
    <property type="entry name" value="HD/PDEase_dom"/>
</dbReference>
<dbReference type="InterPro" id="IPR006674">
    <property type="entry name" value="HD_domain"/>
</dbReference>
<dbReference type="InterPro" id="IPR026875">
    <property type="entry name" value="PHydrolase_assoc_dom"/>
</dbReference>
<dbReference type="NCBIfam" id="TIGR01353">
    <property type="entry name" value="dGTP_triPase"/>
    <property type="match status" value="1"/>
</dbReference>
<dbReference type="NCBIfam" id="NF002327">
    <property type="entry name" value="PRK01286.1-2"/>
    <property type="match status" value="1"/>
</dbReference>
<dbReference type="PANTHER" id="PTHR35795:SF1">
    <property type="entry name" value="BIS(5'-NUCLEOSYL)-TETRAPHOSPHATASE, SYMMETRICAL"/>
    <property type="match status" value="1"/>
</dbReference>
<dbReference type="PANTHER" id="PTHR35795">
    <property type="entry name" value="SLR1885 PROTEIN"/>
    <property type="match status" value="1"/>
</dbReference>
<dbReference type="Pfam" id="PF01966">
    <property type="entry name" value="HD"/>
    <property type="match status" value="1"/>
</dbReference>
<dbReference type="Pfam" id="PF13286">
    <property type="entry name" value="HD_assoc"/>
    <property type="match status" value="1"/>
</dbReference>
<dbReference type="SMART" id="SM00471">
    <property type="entry name" value="HDc"/>
    <property type="match status" value="1"/>
</dbReference>
<dbReference type="SUPFAM" id="SSF109604">
    <property type="entry name" value="HD-domain/PDEase-like"/>
    <property type="match status" value="1"/>
</dbReference>
<dbReference type="PROSITE" id="PS51831">
    <property type="entry name" value="HD"/>
    <property type="match status" value="1"/>
</dbReference>
<feature type="chain" id="PRO_0000205322" description="Deoxyguanosinetriphosphate triphosphohydrolase-like protein">
    <location>
        <begin position="1"/>
        <end position="339"/>
    </location>
</feature>
<feature type="domain" description="HD" evidence="2">
    <location>
        <begin position="75"/>
        <end position="186"/>
    </location>
</feature>
<gene>
    <name type="ordered locus">TTE1757</name>
</gene>
<protein>
    <recommendedName>
        <fullName evidence="1">Deoxyguanosinetriphosphate triphosphohydrolase-like protein</fullName>
    </recommendedName>
</protein>
<comment type="similarity">
    <text evidence="1">Belongs to the dGTPase family. Type 2 subfamily.</text>
</comment>
<evidence type="ECO:0000255" key="1">
    <source>
        <dbReference type="HAMAP-Rule" id="MF_01212"/>
    </source>
</evidence>
<evidence type="ECO:0000255" key="2">
    <source>
        <dbReference type="PROSITE-ProRule" id="PRU01175"/>
    </source>
</evidence>